<comment type="subcellular location">
    <subcellularLocation>
        <location evidence="4">Nucleus</location>
    </subcellularLocation>
</comment>
<comment type="developmental stage">
    <text evidence="3">Exclusively expressed in restricted domains of the developing central nervous system, in particular the diencephalon and rhombencephalon, where it is expressed in migrating cells giving rise to the cerebellar external granular layer and to specific populations of dorsal sensory interneurons of the spinal cord.</text>
</comment>
<comment type="similarity">
    <text evidence="4">Belongs to the BAR homeobox family.</text>
</comment>
<sequence length="327" mass="35136">MEGSNGFGIDSILSHRAGSPALPKGDPLLGDCRSPLELSPRSESSSDCSSPASPGRDCLETSTSRPGAASGPGLDSHLQPGQLSAPAQSRTVTSSFLIRDILADCKPLAACAPYSSSGQPAAPEPGGRLAAKAGEDFRDKLDKSVSSASSDSEYKVKEEGDREISSSRDSPPVRLKKPRKARTAFTDHQLAQLERSFERQKYLSVQDRMELAASLNLTDTQVKTWYQNRRTKWKRQTAVGLELLAEAGNYSALQRMFPSPYFYPQSLVSNLDPGAALYLYRGPSAPPPALQRPLVPRILIHGLQGASEPPPPLPPLPGVLPRAAQPR</sequence>
<dbReference type="EMBL" id="AJ237590">
    <property type="protein sequence ID" value="CAB92529.1"/>
    <property type="molecule type" value="mRNA"/>
</dbReference>
<dbReference type="EMBL" id="AB043980">
    <property type="protein sequence ID" value="BAB18599.1"/>
    <property type="molecule type" value="mRNA"/>
</dbReference>
<dbReference type="EMBL" id="AF264026">
    <property type="protein sequence ID" value="AAK58534.1"/>
    <property type="molecule type" value="mRNA"/>
</dbReference>
<dbReference type="EMBL" id="BC055731">
    <property type="protein sequence ID" value="AAH55731.1"/>
    <property type="molecule type" value="mRNA"/>
</dbReference>
<dbReference type="CCDS" id="CCDS15849.1"/>
<dbReference type="RefSeq" id="NP_001157658.1">
    <property type="nucleotide sequence ID" value="NM_001164186.2"/>
</dbReference>
<dbReference type="RefSeq" id="NP_001342363.1">
    <property type="nucleotide sequence ID" value="NM_001355434.2"/>
</dbReference>
<dbReference type="RefSeq" id="NP_001408465.1">
    <property type="nucleotide sequence ID" value="NM_001421536.1"/>
</dbReference>
<dbReference type="RefSeq" id="NP_062319.1">
    <property type="nucleotide sequence ID" value="NM_019446.5"/>
</dbReference>
<dbReference type="RefSeq" id="XP_006498245.1">
    <property type="nucleotide sequence ID" value="XM_006498182.3"/>
</dbReference>
<dbReference type="RefSeq" id="XP_006498246.1">
    <property type="nucleotide sequence ID" value="XM_006498183.2"/>
</dbReference>
<dbReference type="RefSeq" id="XP_011237440.1">
    <property type="nucleotide sequence ID" value="XM_011239138.3"/>
</dbReference>
<dbReference type="RefSeq" id="XP_030107744.1">
    <property type="nucleotide sequence ID" value="XM_030251884.1"/>
</dbReference>
<dbReference type="RefSeq" id="XP_030107745.1">
    <property type="nucleotide sequence ID" value="XM_030251885.1"/>
</dbReference>
<dbReference type="RefSeq" id="XP_030107746.1">
    <property type="nucleotide sequence ID" value="XM_030251886.1"/>
</dbReference>
<dbReference type="SMR" id="P63157"/>
<dbReference type="BioGRID" id="207657">
    <property type="interactions" value="3"/>
</dbReference>
<dbReference type="FunCoup" id="P63157">
    <property type="interactions" value="1209"/>
</dbReference>
<dbReference type="IntAct" id="P63157">
    <property type="interactions" value="2"/>
</dbReference>
<dbReference type="STRING" id="10090.ENSMUSP00000053147"/>
<dbReference type="PhosphoSitePlus" id="P63157"/>
<dbReference type="PaxDb" id="10090-ENSMUSP00000053147"/>
<dbReference type="ProteomicsDB" id="277178"/>
<dbReference type="Antibodypedia" id="1441">
    <property type="antibodies" value="137 antibodies from 15 providers"/>
</dbReference>
<dbReference type="DNASU" id="54422"/>
<dbReference type="Ensembl" id="ENSMUST00000050776.9">
    <property type="protein sequence ID" value="ENSMUSP00000053147.3"/>
    <property type="gene ID" value="ENSMUSG00000026805.15"/>
</dbReference>
<dbReference type="Ensembl" id="ENSMUST00000113847.3">
    <property type="protein sequence ID" value="ENSMUSP00000109478.2"/>
    <property type="gene ID" value="ENSMUSG00000026805.15"/>
</dbReference>
<dbReference type="Ensembl" id="ENSMUST00000113849.8">
    <property type="protein sequence ID" value="ENSMUSP00000109480.2"/>
    <property type="gene ID" value="ENSMUSG00000026805.15"/>
</dbReference>
<dbReference type="GeneID" id="54422"/>
<dbReference type="KEGG" id="mmu:54422"/>
<dbReference type="UCSC" id="uc008izh.2">
    <property type="organism name" value="mouse"/>
</dbReference>
<dbReference type="AGR" id="MGI:1859288"/>
<dbReference type="CTD" id="56751"/>
<dbReference type="MGI" id="MGI:1859288">
    <property type="gene designation" value="Barhl1"/>
</dbReference>
<dbReference type="VEuPathDB" id="HostDB:ENSMUSG00000026805"/>
<dbReference type="eggNOG" id="KOG0488">
    <property type="taxonomic scope" value="Eukaryota"/>
</dbReference>
<dbReference type="GeneTree" id="ENSGT00940000160428"/>
<dbReference type="HOGENOM" id="CLU_074592_0_0_1"/>
<dbReference type="InParanoid" id="P63157"/>
<dbReference type="OMA" id="LIGDCRS"/>
<dbReference type="OrthoDB" id="6159439at2759"/>
<dbReference type="PhylomeDB" id="P63157"/>
<dbReference type="TreeFam" id="TF316128"/>
<dbReference type="BioGRID-ORCS" id="54422">
    <property type="hits" value="1 hit in 78 CRISPR screens"/>
</dbReference>
<dbReference type="PRO" id="PR:P63157"/>
<dbReference type="Proteomes" id="UP000000589">
    <property type="component" value="Chromosome 2"/>
</dbReference>
<dbReference type="RNAct" id="P63157">
    <property type="molecule type" value="protein"/>
</dbReference>
<dbReference type="Bgee" id="ENSMUSG00000026805">
    <property type="expression patterns" value="Expressed in spinal cord mantle layer and 33 other cell types or tissues"/>
</dbReference>
<dbReference type="GO" id="GO:0005634">
    <property type="term" value="C:nucleus"/>
    <property type="evidence" value="ECO:0000314"/>
    <property type="project" value="MGI"/>
</dbReference>
<dbReference type="GO" id="GO:0001228">
    <property type="term" value="F:DNA-binding transcription activator activity, RNA polymerase II-specific"/>
    <property type="evidence" value="ECO:0000314"/>
    <property type="project" value="MGI"/>
</dbReference>
<dbReference type="GO" id="GO:1990837">
    <property type="term" value="F:sequence-specific double-stranded DNA binding"/>
    <property type="evidence" value="ECO:0007669"/>
    <property type="project" value="Ensembl"/>
</dbReference>
<dbReference type="GO" id="GO:0030901">
    <property type="term" value="P:midbrain development"/>
    <property type="evidence" value="ECO:0000315"/>
    <property type="project" value="MGI"/>
</dbReference>
<dbReference type="GO" id="GO:0043524">
    <property type="term" value="P:negative regulation of neuron apoptotic process"/>
    <property type="evidence" value="ECO:0000315"/>
    <property type="project" value="MGI"/>
</dbReference>
<dbReference type="GO" id="GO:1905586">
    <property type="term" value="P:negative regulation of outer hair cell apoptotic process"/>
    <property type="evidence" value="ECO:0000315"/>
    <property type="project" value="MGI"/>
</dbReference>
<dbReference type="GO" id="GO:0051402">
    <property type="term" value="P:neuron apoptotic process"/>
    <property type="evidence" value="ECO:0000315"/>
    <property type="project" value="MGI"/>
</dbReference>
<dbReference type="GO" id="GO:0001764">
    <property type="term" value="P:neuron migration"/>
    <property type="evidence" value="ECO:0000315"/>
    <property type="project" value="MGI"/>
</dbReference>
<dbReference type="GO" id="GO:1905584">
    <property type="term" value="P:outer hair cell apoptotic process"/>
    <property type="evidence" value="ECO:0000315"/>
    <property type="project" value="MGI"/>
</dbReference>
<dbReference type="GO" id="GO:0045944">
    <property type="term" value="P:positive regulation of transcription by RNA polymerase II"/>
    <property type="evidence" value="ECO:0000314"/>
    <property type="project" value="MGI"/>
</dbReference>
<dbReference type="GO" id="GO:0007605">
    <property type="term" value="P:sensory perception of sound"/>
    <property type="evidence" value="ECO:0000315"/>
    <property type="project" value="MGI"/>
</dbReference>
<dbReference type="CDD" id="cd00086">
    <property type="entry name" value="homeodomain"/>
    <property type="match status" value="1"/>
</dbReference>
<dbReference type="FunFam" id="1.10.10.60:FF:000097">
    <property type="entry name" value="barH-like 2 homeobox protein-like"/>
    <property type="match status" value="1"/>
</dbReference>
<dbReference type="Gene3D" id="1.10.10.60">
    <property type="entry name" value="Homeodomain-like"/>
    <property type="match status" value="1"/>
</dbReference>
<dbReference type="InterPro" id="IPR001356">
    <property type="entry name" value="HD"/>
</dbReference>
<dbReference type="InterPro" id="IPR020479">
    <property type="entry name" value="HD_metazoa"/>
</dbReference>
<dbReference type="InterPro" id="IPR017970">
    <property type="entry name" value="Homeobox_CS"/>
</dbReference>
<dbReference type="InterPro" id="IPR050848">
    <property type="entry name" value="Homeobox_TF"/>
</dbReference>
<dbReference type="InterPro" id="IPR009057">
    <property type="entry name" value="Homeodomain-like_sf"/>
</dbReference>
<dbReference type="PANTHER" id="PTHR24333">
    <property type="entry name" value="HOMEO BOX HB9 LIKE A-RELATED"/>
    <property type="match status" value="1"/>
</dbReference>
<dbReference type="PANTHER" id="PTHR24333:SF5">
    <property type="entry name" value="VENT HOMEOBOX"/>
    <property type="match status" value="1"/>
</dbReference>
<dbReference type="Pfam" id="PF00046">
    <property type="entry name" value="Homeodomain"/>
    <property type="match status" value="1"/>
</dbReference>
<dbReference type="PRINTS" id="PR00024">
    <property type="entry name" value="HOMEOBOX"/>
</dbReference>
<dbReference type="SMART" id="SM00389">
    <property type="entry name" value="HOX"/>
    <property type="match status" value="1"/>
</dbReference>
<dbReference type="SUPFAM" id="SSF46689">
    <property type="entry name" value="Homeodomain-like"/>
    <property type="match status" value="1"/>
</dbReference>
<dbReference type="PROSITE" id="PS00027">
    <property type="entry name" value="HOMEOBOX_1"/>
    <property type="match status" value="1"/>
</dbReference>
<dbReference type="PROSITE" id="PS50071">
    <property type="entry name" value="HOMEOBOX_2"/>
    <property type="match status" value="1"/>
</dbReference>
<proteinExistence type="evidence at transcript level"/>
<gene>
    <name type="primary">Barhl1</name>
    <name type="synonym">Bhx1</name>
    <name type="synonym">Mbh2</name>
</gene>
<accession>P63157</accession>
<accession>Q9JK26</accession>
<protein>
    <recommendedName>
        <fullName>BarH-like 1 homeobox protein</fullName>
    </recommendedName>
    <alternativeName>
        <fullName>Bar-class homeodomain protein MBH2</fullName>
    </alternativeName>
    <alternativeName>
        <fullName>BarH-related homeobox protein 1</fullName>
    </alternativeName>
</protein>
<evidence type="ECO:0000255" key="1">
    <source>
        <dbReference type="PROSITE-ProRule" id="PRU00108"/>
    </source>
</evidence>
<evidence type="ECO:0000256" key="2">
    <source>
        <dbReference type="SAM" id="MobiDB-lite"/>
    </source>
</evidence>
<evidence type="ECO:0000269" key="3">
    <source>
    </source>
</evidence>
<evidence type="ECO:0000305" key="4"/>
<reference key="1">
    <citation type="journal article" date="2000" name="Hum. Mol. Genet.">
        <title>Barhl1, a gene belonging to a new subfamily of mammalian homeobox genes, is expressed in migrating neurons of the CNS.</title>
        <authorList>
            <person name="Bulfone A."/>
            <person name="Menguzzato E."/>
            <person name="Broccoli V."/>
            <person name="Marchitiello A."/>
            <person name="Gattuso C."/>
            <person name="Mariani M."/>
            <person name="Consalez G.G."/>
            <person name="Martinez S."/>
            <person name="Ballabio A."/>
            <person name="Banfi S."/>
        </authorList>
    </citation>
    <scope>NUCLEOTIDE SEQUENCE [MRNA]</scope>
    <scope>DEVELOPMENTAL STAGE</scope>
</reference>
<reference key="2">
    <citation type="submission" date="2000-05" db="EMBL/GenBank/DDBJ databases">
        <title>Identification of a mammalian Bar-class homeobox gene.</title>
        <authorList>
            <person name="Hama T."/>
            <person name="Saba R."/>
            <person name="Nakatsuji N."/>
            <person name="Saito T."/>
        </authorList>
    </citation>
    <scope>NUCLEOTIDE SEQUENCE [MRNA]</scope>
    <source>
        <strain>ICR</strain>
    </source>
</reference>
<reference key="3">
    <citation type="submission" date="2000-05" db="EMBL/GenBank/DDBJ databases">
        <title>Identification of bhx1, a BarH-related homeobox gene expressed in the developing mouse nervous system.</title>
        <authorList>
            <person name="Toresson H."/>
            <person name="Campbell K."/>
        </authorList>
    </citation>
    <scope>NUCLEOTIDE SEQUENCE [MRNA]</scope>
    <source>
        <strain>C57BL/6J</strain>
        <tissue>Embryo</tissue>
    </source>
</reference>
<reference key="4">
    <citation type="journal article" date="2004" name="Genome Res.">
        <title>The status, quality, and expansion of the NIH full-length cDNA project: the Mammalian Gene Collection (MGC).</title>
        <authorList>
            <consortium name="The MGC Project Team"/>
        </authorList>
    </citation>
    <scope>NUCLEOTIDE SEQUENCE [LARGE SCALE MRNA]</scope>
    <source>
        <strain>C57BL/6J</strain>
        <tissue>Brain</tissue>
    </source>
</reference>
<organism>
    <name type="scientific">Mus musculus</name>
    <name type="common">Mouse</name>
    <dbReference type="NCBI Taxonomy" id="10090"/>
    <lineage>
        <taxon>Eukaryota</taxon>
        <taxon>Metazoa</taxon>
        <taxon>Chordata</taxon>
        <taxon>Craniata</taxon>
        <taxon>Vertebrata</taxon>
        <taxon>Euteleostomi</taxon>
        <taxon>Mammalia</taxon>
        <taxon>Eutheria</taxon>
        <taxon>Euarchontoglires</taxon>
        <taxon>Glires</taxon>
        <taxon>Rodentia</taxon>
        <taxon>Myomorpha</taxon>
        <taxon>Muroidea</taxon>
        <taxon>Muridae</taxon>
        <taxon>Murinae</taxon>
        <taxon>Mus</taxon>
        <taxon>Mus</taxon>
    </lineage>
</organism>
<name>BARH1_MOUSE</name>
<keyword id="KW-0238">DNA-binding</keyword>
<keyword id="KW-0371">Homeobox</keyword>
<keyword id="KW-0539">Nucleus</keyword>
<keyword id="KW-1185">Reference proteome</keyword>
<keyword id="KW-0804">Transcription</keyword>
<keyword id="KW-0805">Transcription regulation</keyword>
<feature type="chain" id="PRO_0000048827" description="BarH-like 1 homeobox protein">
    <location>
        <begin position="1"/>
        <end position="327"/>
    </location>
</feature>
<feature type="DNA-binding region" description="Homeobox" evidence="1">
    <location>
        <begin position="178"/>
        <end position="237"/>
    </location>
</feature>
<feature type="region of interest" description="Disordered" evidence="2">
    <location>
        <begin position="1"/>
        <end position="90"/>
    </location>
</feature>
<feature type="region of interest" description="Disordered" evidence="2">
    <location>
        <begin position="113"/>
        <end position="181"/>
    </location>
</feature>
<feature type="region of interest" description="Disordered" evidence="2">
    <location>
        <begin position="303"/>
        <end position="327"/>
    </location>
</feature>
<feature type="compositionally biased region" description="Low complexity" evidence="2">
    <location>
        <begin position="33"/>
        <end position="54"/>
    </location>
</feature>
<feature type="compositionally biased region" description="Polar residues" evidence="2">
    <location>
        <begin position="79"/>
        <end position="90"/>
    </location>
</feature>
<feature type="compositionally biased region" description="Basic and acidic residues" evidence="2">
    <location>
        <begin position="133"/>
        <end position="143"/>
    </location>
</feature>
<feature type="compositionally biased region" description="Basic and acidic residues" evidence="2">
    <location>
        <begin position="152"/>
        <end position="166"/>
    </location>
</feature>
<feature type="compositionally biased region" description="Pro residues" evidence="2">
    <location>
        <begin position="308"/>
        <end position="318"/>
    </location>
</feature>